<comment type="subunit">
    <text evidence="1">Part of the 50S ribosomal subunit.</text>
</comment>
<comment type="similarity">
    <text evidence="1">Belongs to the bacterial ribosomal protein bL31 family. Type B subfamily.</text>
</comment>
<gene>
    <name evidence="1" type="primary">rpmE2</name>
    <name type="ordered locus">Mvan_5333</name>
</gene>
<reference key="1">
    <citation type="submission" date="2006-12" db="EMBL/GenBank/DDBJ databases">
        <title>Complete sequence of Mycobacterium vanbaalenii PYR-1.</title>
        <authorList>
            <consortium name="US DOE Joint Genome Institute"/>
            <person name="Copeland A."/>
            <person name="Lucas S."/>
            <person name="Lapidus A."/>
            <person name="Barry K."/>
            <person name="Detter J.C."/>
            <person name="Glavina del Rio T."/>
            <person name="Hammon N."/>
            <person name="Israni S."/>
            <person name="Dalin E."/>
            <person name="Tice H."/>
            <person name="Pitluck S."/>
            <person name="Singan V."/>
            <person name="Schmutz J."/>
            <person name="Larimer F."/>
            <person name="Land M."/>
            <person name="Hauser L."/>
            <person name="Kyrpides N."/>
            <person name="Anderson I.J."/>
            <person name="Miller C."/>
            <person name="Richardson P."/>
        </authorList>
    </citation>
    <scope>NUCLEOTIDE SEQUENCE [LARGE SCALE GENOMIC DNA]</scope>
    <source>
        <strain>DSM 7251 / JCM 13017 / BCRC 16820 / KCTC 9966 / NRRL B-24157 / PYR-1</strain>
    </source>
</reference>
<dbReference type="EMBL" id="CP000511">
    <property type="protein sequence ID" value="ABM16104.1"/>
    <property type="molecule type" value="Genomic_DNA"/>
</dbReference>
<dbReference type="RefSeq" id="WP_011782474.1">
    <property type="nucleotide sequence ID" value="NZ_JACKSD010000281.1"/>
</dbReference>
<dbReference type="SMR" id="A1TG04"/>
<dbReference type="STRING" id="350058.Mvan_5333"/>
<dbReference type="KEGG" id="mva:Mvan_5333"/>
<dbReference type="eggNOG" id="COG0254">
    <property type="taxonomic scope" value="Bacteria"/>
</dbReference>
<dbReference type="HOGENOM" id="CLU_114306_2_1_11"/>
<dbReference type="Proteomes" id="UP000009159">
    <property type="component" value="Chromosome"/>
</dbReference>
<dbReference type="GO" id="GO:1990904">
    <property type="term" value="C:ribonucleoprotein complex"/>
    <property type="evidence" value="ECO:0007669"/>
    <property type="project" value="UniProtKB-KW"/>
</dbReference>
<dbReference type="GO" id="GO:0005840">
    <property type="term" value="C:ribosome"/>
    <property type="evidence" value="ECO:0007669"/>
    <property type="project" value="UniProtKB-KW"/>
</dbReference>
<dbReference type="GO" id="GO:0003735">
    <property type="term" value="F:structural constituent of ribosome"/>
    <property type="evidence" value="ECO:0007669"/>
    <property type="project" value="InterPro"/>
</dbReference>
<dbReference type="GO" id="GO:0006412">
    <property type="term" value="P:translation"/>
    <property type="evidence" value="ECO:0007669"/>
    <property type="project" value="UniProtKB-UniRule"/>
</dbReference>
<dbReference type="Gene3D" id="4.10.830.30">
    <property type="entry name" value="Ribosomal protein L31"/>
    <property type="match status" value="1"/>
</dbReference>
<dbReference type="HAMAP" id="MF_00502">
    <property type="entry name" value="Ribosomal_bL31_2"/>
    <property type="match status" value="1"/>
</dbReference>
<dbReference type="InterPro" id="IPR034704">
    <property type="entry name" value="Ribosomal_bL28/bL31-like_sf"/>
</dbReference>
<dbReference type="InterPro" id="IPR002150">
    <property type="entry name" value="Ribosomal_bL31"/>
</dbReference>
<dbReference type="InterPro" id="IPR027493">
    <property type="entry name" value="Ribosomal_bL31_B"/>
</dbReference>
<dbReference type="InterPro" id="IPR042105">
    <property type="entry name" value="Ribosomal_bL31_sf"/>
</dbReference>
<dbReference type="NCBIfam" id="TIGR00105">
    <property type="entry name" value="L31"/>
    <property type="match status" value="1"/>
</dbReference>
<dbReference type="NCBIfam" id="NF002462">
    <property type="entry name" value="PRK01678.1"/>
    <property type="match status" value="1"/>
</dbReference>
<dbReference type="PANTHER" id="PTHR33280">
    <property type="entry name" value="50S RIBOSOMAL PROTEIN L31, CHLOROPLASTIC"/>
    <property type="match status" value="1"/>
</dbReference>
<dbReference type="PANTHER" id="PTHR33280:SF1">
    <property type="entry name" value="LARGE RIBOSOMAL SUBUNIT PROTEIN BL31C"/>
    <property type="match status" value="1"/>
</dbReference>
<dbReference type="Pfam" id="PF01197">
    <property type="entry name" value="Ribosomal_L31"/>
    <property type="match status" value="1"/>
</dbReference>
<dbReference type="PRINTS" id="PR01249">
    <property type="entry name" value="RIBOSOMALL31"/>
</dbReference>
<dbReference type="SUPFAM" id="SSF143800">
    <property type="entry name" value="L28p-like"/>
    <property type="match status" value="1"/>
</dbReference>
<dbReference type="PROSITE" id="PS01143">
    <property type="entry name" value="RIBOSOMAL_L31"/>
    <property type="match status" value="1"/>
</dbReference>
<proteinExistence type="inferred from homology"/>
<accession>A1TG04</accession>
<sequence length="91" mass="10255">MKPGIHPDYHPVVFQDANTGKQFLTRSTLTSARTVEWETSEGVREYPLVVVEVTSDSHPFWTGSRRIVDAAGQVEKFRRRYGSRKSGASSD</sequence>
<evidence type="ECO:0000255" key="1">
    <source>
        <dbReference type="HAMAP-Rule" id="MF_00502"/>
    </source>
</evidence>
<evidence type="ECO:0000305" key="2"/>
<name>RL31B_MYCVP</name>
<keyword id="KW-0687">Ribonucleoprotein</keyword>
<keyword id="KW-0689">Ribosomal protein</keyword>
<feature type="chain" id="PRO_1000014705" description="Large ribosomal subunit protein bL31B">
    <location>
        <begin position="1"/>
        <end position="91"/>
    </location>
</feature>
<organism>
    <name type="scientific">Mycolicibacterium vanbaalenii (strain DSM 7251 / JCM 13017 / BCRC 16820 / KCTC 9966 / NRRL B-24157 / PYR-1)</name>
    <name type="common">Mycobacterium vanbaalenii</name>
    <dbReference type="NCBI Taxonomy" id="350058"/>
    <lineage>
        <taxon>Bacteria</taxon>
        <taxon>Bacillati</taxon>
        <taxon>Actinomycetota</taxon>
        <taxon>Actinomycetes</taxon>
        <taxon>Mycobacteriales</taxon>
        <taxon>Mycobacteriaceae</taxon>
        <taxon>Mycolicibacterium</taxon>
    </lineage>
</organism>
<protein>
    <recommendedName>
        <fullName evidence="1">Large ribosomal subunit protein bL31B</fullName>
    </recommendedName>
    <alternativeName>
        <fullName evidence="2">50S ribosomal protein L31 type B</fullName>
    </alternativeName>
</protein>